<reference key="1">
    <citation type="journal article" date="1994" name="Mol. Cell. Biol.">
        <title>MafB,a new Maf family transcription activator that can associate with Maf and Fos but not with Jun.</title>
        <authorList>
            <person name="Kataoka K."/>
            <person name="Fujiwara K.T."/>
            <person name="Noda M."/>
            <person name="Nishizawa M."/>
        </authorList>
    </citation>
    <scope>NUCLEOTIDE SEQUENCE [GENOMIC DNA]</scope>
    <scope>FUNCTION</scope>
    <scope>SUBUNIT</scope>
    <scope>INTERACTION WITH FOS</scope>
    <scope>SELF-ASSOCIATION</scope>
    <scope>TISSUE SPECIFICITY</scope>
</reference>
<reference key="2">
    <citation type="journal article" date="2001" name="J. Biol. Chem.">
        <title>A set of Hox proteins interact with the Maf oncoprotein to inhibit its DNA binding, transactivation, and transforming activities.</title>
        <authorList>
            <person name="Kataoka K."/>
            <person name="Yoshitomo-Nakagawa K."/>
            <person name="Shioda S."/>
            <person name="Nishizawa M."/>
        </authorList>
    </citation>
    <scope>INTERACTION WITH HOXD12 AND PRRX1</scope>
</reference>
<reference key="3">
    <citation type="journal article" date="2002" name="Genes Cells">
        <title>Characterization of the chicken L-Maf, MafB and c-Maf in crystallin gene regulation and lens differentiation.</title>
        <authorList>
            <person name="Yoshida T."/>
            <person name="Yasuda K."/>
        </authorList>
    </citation>
    <scope>FUNCTION</scope>
    <scope>DNA-BINDING</scope>
</reference>
<accession>Q90888</accession>
<sequence length="311" mass="35467">MAGELSIGAELPTSPLAMEYVNDFDLMKFDVKKEPLGRNDRSGRHCTRLQPAGSVSSTPISTPCSSVPSSPSFSPTEQKTHLEDLYWMANSYQQMNPEALNLTPEDAVEALIGSHQVSQQLQGFESFRAHHHHHHHHHQHHHQYPAVTHEDLAGSGHPHHHHHHHHQASPTPSTSSSSSQQLQTSHQQHPPSSSVEDRFSDDQLVSMSVRELNRHLRGFTKDEVIRLKQKRRTLKNRGYAQSCRYKRVQQKHHLENEKTQLIQQVEQLKQEVTRLARERDAYKLKCEKLASNGFREAGSTSDNPSSPEFFM</sequence>
<keyword id="KW-0010">Activator</keyword>
<keyword id="KW-0238">DNA-binding</keyword>
<keyword id="KW-0539">Nucleus</keyword>
<keyword id="KW-1185">Reference proteome</keyword>
<keyword id="KW-0678">Repressor</keyword>
<keyword id="KW-0804">Transcription</keyword>
<keyword id="KW-0805">Transcription regulation</keyword>
<proteinExistence type="evidence at protein level"/>
<comment type="function">
    <text evidence="5 6">Acts as a transcriptional activator or repressor. Positively regulates the expression of alpha-A crystallin genes during lens fiber cell differentiation. Binds to Maf recognition elements (MARE).</text>
</comment>
<comment type="subunit">
    <text evidence="1 4 6">Homodimer or heterodimer with other bHLH-Zip transcription factors (By similarity). Binds DNA as a homodimer or heterodimer. Self-associates; the interaction requires the intact MAFB leucine-zipper domain. Interacts with FOS, HOXD12 and PRRX1.</text>
</comment>
<comment type="subcellular location">
    <subcellularLocation>
        <location evidence="2">Nucleus</location>
    </subcellularLocation>
</comment>
<comment type="tissue specificity">
    <text evidence="6">Expressed in brain, thymus, gut, lung, mesenterium, spleen, kidney, ovary and bursa.</text>
</comment>
<comment type="developmental stage">
    <text>Expressed in the lens placode at stages 5, 8 and 14. Expressed at stage 18 when the invaginating lens placode closes to form the lens vesicle.</text>
</comment>
<comment type="similarity">
    <text evidence="7">Belongs to the bZIP family. Maf subfamily.</text>
</comment>
<evidence type="ECO:0000250" key="1"/>
<evidence type="ECO:0000255" key="2">
    <source>
        <dbReference type="PROSITE-ProRule" id="PRU00978"/>
    </source>
</evidence>
<evidence type="ECO:0000256" key="3">
    <source>
        <dbReference type="SAM" id="MobiDB-lite"/>
    </source>
</evidence>
<evidence type="ECO:0000269" key="4">
    <source>
    </source>
</evidence>
<evidence type="ECO:0000269" key="5">
    <source>
    </source>
</evidence>
<evidence type="ECO:0000269" key="6">
    <source>
    </source>
</evidence>
<evidence type="ECO:0000305" key="7"/>
<feature type="chain" id="PRO_0000366123" description="Transcription factor MafB">
    <location>
        <begin position="1"/>
        <end position="311"/>
    </location>
</feature>
<feature type="domain" description="bZIP" evidence="2">
    <location>
        <begin position="226"/>
        <end position="289"/>
    </location>
</feature>
<feature type="region of interest" description="Disordered" evidence="3">
    <location>
        <begin position="35"/>
        <end position="78"/>
    </location>
</feature>
<feature type="region of interest" description="Disordered" evidence="3">
    <location>
        <begin position="150"/>
        <end position="199"/>
    </location>
</feature>
<feature type="region of interest" description="Basic motif" evidence="2">
    <location>
        <begin position="226"/>
        <end position="251"/>
    </location>
</feature>
<feature type="region of interest" description="Leucine-zipper" evidence="2">
    <location>
        <begin position="254"/>
        <end position="275"/>
    </location>
</feature>
<feature type="compositionally biased region" description="Low complexity" evidence="3">
    <location>
        <begin position="54"/>
        <end position="76"/>
    </location>
</feature>
<feature type="compositionally biased region" description="Basic residues" evidence="3">
    <location>
        <begin position="157"/>
        <end position="167"/>
    </location>
</feature>
<feature type="compositionally biased region" description="Low complexity" evidence="3">
    <location>
        <begin position="168"/>
        <end position="194"/>
    </location>
</feature>
<name>MAFB_CHICK</name>
<protein>
    <recommendedName>
        <fullName>Transcription factor MafB</fullName>
        <shortName>Maf-B</shortName>
    </recommendedName>
    <alternativeName>
        <fullName>V-maf musculoaponeurotic fibrosarcoma oncogene homolog B</fullName>
    </alternativeName>
</protein>
<gene>
    <name type="primary">MAFB</name>
</gene>
<organism>
    <name type="scientific">Gallus gallus</name>
    <name type="common">Chicken</name>
    <dbReference type="NCBI Taxonomy" id="9031"/>
    <lineage>
        <taxon>Eukaryota</taxon>
        <taxon>Metazoa</taxon>
        <taxon>Chordata</taxon>
        <taxon>Craniata</taxon>
        <taxon>Vertebrata</taxon>
        <taxon>Euteleostomi</taxon>
        <taxon>Archelosauria</taxon>
        <taxon>Archosauria</taxon>
        <taxon>Dinosauria</taxon>
        <taxon>Saurischia</taxon>
        <taxon>Theropoda</taxon>
        <taxon>Coelurosauria</taxon>
        <taxon>Aves</taxon>
        <taxon>Neognathae</taxon>
        <taxon>Galloanserae</taxon>
        <taxon>Galliformes</taxon>
        <taxon>Phasianidae</taxon>
        <taxon>Phasianinae</taxon>
        <taxon>Gallus</taxon>
    </lineage>
</organism>
<dbReference type="EMBL" id="D28600">
    <property type="protein sequence ID" value="BAA05938.1"/>
    <property type="molecule type" value="Genomic_DNA"/>
</dbReference>
<dbReference type="PIR" id="A56235">
    <property type="entry name" value="A56235"/>
</dbReference>
<dbReference type="RefSeq" id="NP_001026023.1">
    <property type="nucleotide sequence ID" value="NM_001030852.2"/>
</dbReference>
<dbReference type="SMR" id="Q90888"/>
<dbReference type="FunCoup" id="Q90888">
    <property type="interactions" value="449"/>
</dbReference>
<dbReference type="MINT" id="Q90888"/>
<dbReference type="STRING" id="9031.ENSGALP00000055757"/>
<dbReference type="GlyGen" id="Q90888">
    <property type="glycosylation" value="1 site"/>
</dbReference>
<dbReference type="Ensembl" id="ENSGALT00010052903.1">
    <property type="protein sequence ID" value="ENSGALP00010031809.1"/>
    <property type="gene ID" value="ENSGALG00010021761.1"/>
</dbReference>
<dbReference type="GeneID" id="419173"/>
<dbReference type="KEGG" id="gga:419173"/>
<dbReference type="CTD" id="9935"/>
<dbReference type="VEuPathDB" id="HostDB:geneid_419173"/>
<dbReference type="GeneTree" id="ENSGT00940000160486"/>
<dbReference type="InParanoid" id="Q90888"/>
<dbReference type="OMA" id="PTEQKHH"/>
<dbReference type="OrthoDB" id="5974330at2759"/>
<dbReference type="PhylomeDB" id="Q90888"/>
<dbReference type="PRO" id="PR:Q90888"/>
<dbReference type="Proteomes" id="UP000000539">
    <property type="component" value="Chromosome 20"/>
</dbReference>
<dbReference type="Bgee" id="ENSGALG00000003670">
    <property type="expression patterns" value="Expressed in spleen and 10 other cell types or tissues"/>
</dbReference>
<dbReference type="GO" id="GO:0005634">
    <property type="term" value="C:nucleus"/>
    <property type="evidence" value="ECO:0000318"/>
    <property type="project" value="GO_Central"/>
</dbReference>
<dbReference type="GO" id="GO:0000981">
    <property type="term" value="F:DNA-binding transcription factor activity, RNA polymerase II-specific"/>
    <property type="evidence" value="ECO:0000318"/>
    <property type="project" value="GO_Central"/>
</dbReference>
<dbReference type="GO" id="GO:0000978">
    <property type="term" value="F:RNA polymerase II cis-regulatory region sequence-specific DNA binding"/>
    <property type="evidence" value="ECO:0000318"/>
    <property type="project" value="GO_Central"/>
</dbReference>
<dbReference type="GO" id="GO:0006355">
    <property type="term" value="P:regulation of DNA-templated transcription"/>
    <property type="evidence" value="ECO:0000250"/>
    <property type="project" value="UniProtKB"/>
</dbReference>
<dbReference type="GO" id="GO:0045637">
    <property type="term" value="P:regulation of myeloid cell differentiation"/>
    <property type="evidence" value="ECO:0000318"/>
    <property type="project" value="GO_Central"/>
</dbReference>
<dbReference type="GO" id="GO:0006357">
    <property type="term" value="P:regulation of transcription by RNA polymerase II"/>
    <property type="evidence" value="ECO:0000318"/>
    <property type="project" value="GO_Central"/>
</dbReference>
<dbReference type="CDD" id="cd14718">
    <property type="entry name" value="bZIP_Maf_large"/>
    <property type="match status" value="1"/>
</dbReference>
<dbReference type="FunFam" id="1.20.5.170:FF:000016">
    <property type="entry name" value="MAF bZIP transcription factor"/>
    <property type="match status" value="1"/>
</dbReference>
<dbReference type="Gene3D" id="1.20.5.170">
    <property type="match status" value="1"/>
</dbReference>
<dbReference type="InterPro" id="IPR004827">
    <property type="entry name" value="bZIP"/>
</dbReference>
<dbReference type="InterPro" id="IPR004826">
    <property type="entry name" value="bZIP_Maf"/>
</dbReference>
<dbReference type="InterPro" id="IPR046347">
    <property type="entry name" value="bZIP_sf"/>
</dbReference>
<dbReference type="InterPro" id="IPR013592">
    <property type="entry name" value="Maf_TF_N"/>
</dbReference>
<dbReference type="InterPro" id="IPR008917">
    <property type="entry name" value="TF_DNA-bd_sf"/>
</dbReference>
<dbReference type="InterPro" id="IPR024874">
    <property type="entry name" value="Transcription_factor_Maf_fam"/>
</dbReference>
<dbReference type="PANTHER" id="PTHR10129">
    <property type="entry name" value="TRANSCRIPTION FACTOR MAF"/>
    <property type="match status" value="1"/>
</dbReference>
<dbReference type="PANTHER" id="PTHR10129:SF10">
    <property type="entry name" value="TRANSCRIPTION FACTOR MAFB"/>
    <property type="match status" value="1"/>
</dbReference>
<dbReference type="Pfam" id="PF03131">
    <property type="entry name" value="bZIP_Maf"/>
    <property type="match status" value="1"/>
</dbReference>
<dbReference type="Pfam" id="PF08383">
    <property type="entry name" value="Maf_N"/>
    <property type="match status" value="1"/>
</dbReference>
<dbReference type="SMART" id="SM00338">
    <property type="entry name" value="BRLZ"/>
    <property type="match status" value="1"/>
</dbReference>
<dbReference type="SUPFAM" id="SSF47454">
    <property type="entry name" value="A DNA-binding domain in eukaryotic transcription factors"/>
    <property type="match status" value="1"/>
</dbReference>
<dbReference type="SUPFAM" id="SSF57959">
    <property type="entry name" value="Leucine zipper domain"/>
    <property type="match status" value="1"/>
</dbReference>
<dbReference type="PROSITE" id="PS50217">
    <property type="entry name" value="BZIP"/>
    <property type="match status" value="1"/>
</dbReference>